<dbReference type="EMBL" id="CP000857">
    <property type="protein sequence ID" value="ACN47603.1"/>
    <property type="molecule type" value="Genomic_DNA"/>
</dbReference>
<dbReference type="RefSeq" id="WP_000820710.1">
    <property type="nucleotide sequence ID" value="NC_012125.1"/>
</dbReference>
<dbReference type="SMR" id="C0Q0C6"/>
<dbReference type="KEGG" id="sei:SPC_3519"/>
<dbReference type="HOGENOM" id="CLU_155943_1_0_6"/>
<dbReference type="Proteomes" id="UP000001599">
    <property type="component" value="Chromosome"/>
</dbReference>
<dbReference type="GO" id="GO:0005737">
    <property type="term" value="C:cytoplasm"/>
    <property type="evidence" value="ECO:0007669"/>
    <property type="project" value="UniProtKB-SubCell"/>
</dbReference>
<dbReference type="GO" id="GO:0008033">
    <property type="term" value="P:tRNA processing"/>
    <property type="evidence" value="ECO:0007669"/>
    <property type="project" value="UniProtKB-UniRule"/>
</dbReference>
<dbReference type="Gene3D" id="3.40.1260.10">
    <property type="entry name" value="DsrEFH-like"/>
    <property type="match status" value="1"/>
</dbReference>
<dbReference type="HAMAP" id="MF_00389">
    <property type="entry name" value="Thiourid_synth_C"/>
    <property type="match status" value="1"/>
</dbReference>
<dbReference type="InterPro" id="IPR027396">
    <property type="entry name" value="DsrEFH-like"/>
</dbReference>
<dbReference type="InterPro" id="IPR003787">
    <property type="entry name" value="Sulphur_relay_DsrE/F-like"/>
</dbReference>
<dbReference type="InterPro" id="IPR037450">
    <property type="entry name" value="Sulphur_relay_TusC"/>
</dbReference>
<dbReference type="InterPro" id="IPR017462">
    <property type="entry name" value="Sulphur_relay_TusC/DsrF"/>
</dbReference>
<dbReference type="NCBIfam" id="NF001238">
    <property type="entry name" value="PRK00211.1"/>
    <property type="match status" value="1"/>
</dbReference>
<dbReference type="NCBIfam" id="TIGR03010">
    <property type="entry name" value="sulf_tusC_dsrF"/>
    <property type="match status" value="1"/>
</dbReference>
<dbReference type="PANTHER" id="PTHR38780">
    <property type="entry name" value="PROTEIN TUSC"/>
    <property type="match status" value="1"/>
</dbReference>
<dbReference type="PANTHER" id="PTHR38780:SF1">
    <property type="entry name" value="PROTEIN TUSC"/>
    <property type="match status" value="1"/>
</dbReference>
<dbReference type="Pfam" id="PF02635">
    <property type="entry name" value="DsrE"/>
    <property type="match status" value="1"/>
</dbReference>
<dbReference type="SUPFAM" id="SSF75169">
    <property type="entry name" value="DsrEFH-like"/>
    <property type="match status" value="1"/>
</dbReference>
<proteinExistence type="inferred from homology"/>
<accession>C0Q0C6</accession>
<organism>
    <name type="scientific">Salmonella paratyphi C (strain RKS4594)</name>
    <dbReference type="NCBI Taxonomy" id="476213"/>
    <lineage>
        <taxon>Bacteria</taxon>
        <taxon>Pseudomonadati</taxon>
        <taxon>Pseudomonadota</taxon>
        <taxon>Gammaproteobacteria</taxon>
        <taxon>Enterobacterales</taxon>
        <taxon>Enterobacteriaceae</taxon>
        <taxon>Salmonella</taxon>
    </lineage>
</organism>
<name>TUSC_SALPC</name>
<protein>
    <recommendedName>
        <fullName evidence="1">Protein TusC</fullName>
    </recommendedName>
    <alternativeName>
        <fullName evidence="1">tRNA 2-thiouridine synthesizing protein C</fullName>
    </alternativeName>
</protein>
<reference key="1">
    <citation type="journal article" date="2009" name="PLoS ONE">
        <title>Salmonella paratyphi C: genetic divergence from Salmonella choleraesuis and pathogenic convergence with Salmonella typhi.</title>
        <authorList>
            <person name="Liu W.-Q."/>
            <person name="Feng Y."/>
            <person name="Wang Y."/>
            <person name="Zou Q.-H."/>
            <person name="Chen F."/>
            <person name="Guo J.-T."/>
            <person name="Peng Y.-H."/>
            <person name="Jin Y."/>
            <person name="Li Y.-G."/>
            <person name="Hu S.-N."/>
            <person name="Johnston R.N."/>
            <person name="Liu G.-R."/>
            <person name="Liu S.-L."/>
        </authorList>
    </citation>
    <scope>NUCLEOTIDE SEQUENCE [LARGE SCALE GENOMIC DNA]</scope>
    <source>
        <strain>RKS4594</strain>
    </source>
</reference>
<evidence type="ECO:0000255" key="1">
    <source>
        <dbReference type="HAMAP-Rule" id="MF_00389"/>
    </source>
</evidence>
<sequence>MKRIAFVFSTAPHGSTSGREGLDALLATSALTEALGVFFISDGVFQLLPGQKPDAVLARDYIATFKLFDLYDIDQCWICAASLRERGLENVNFVVDATPLEPVALRRELGNYDVILRF</sequence>
<feature type="chain" id="PRO_1000134411" description="Protein TusC">
    <location>
        <begin position="1"/>
        <end position="118"/>
    </location>
</feature>
<gene>
    <name evidence="1" type="primary">tusC</name>
    <name type="ordered locus">SPC_3519</name>
</gene>
<comment type="function">
    <text evidence="1">Part of a sulfur-relay system required for 2-thiolation of 5-methylaminomethyl-2-thiouridine (mnm(5)s(2)U) at tRNA wobble positions.</text>
</comment>
<comment type="subunit">
    <text evidence="1">Heterohexamer, formed by a dimer of trimers. The hexameric TusBCD complex contains 2 copies each of TusB, TusC and TusD. The TusBCD complex interacts with TusE.</text>
</comment>
<comment type="subcellular location">
    <subcellularLocation>
        <location evidence="1">Cytoplasm</location>
    </subcellularLocation>
</comment>
<comment type="similarity">
    <text evidence="1">Belongs to the DsrF/TusC family.</text>
</comment>
<keyword id="KW-0963">Cytoplasm</keyword>
<keyword id="KW-0819">tRNA processing</keyword>